<dbReference type="EC" id="3.1.26.3" evidence="1"/>
<dbReference type="EMBL" id="AE001437">
    <property type="protein sequence ID" value="AAK79714.1"/>
    <property type="molecule type" value="Genomic_DNA"/>
</dbReference>
<dbReference type="PIR" id="G97115">
    <property type="entry name" value="G97115"/>
</dbReference>
<dbReference type="RefSeq" id="NP_348374.1">
    <property type="nucleotide sequence ID" value="NC_003030.1"/>
</dbReference>
<dbReference type="RefSeq" id="WP_010965055.1">
    <property type="nucleotide sequence ID" value="NC_003030.1"/>
</dbReference>
<dbReference type="SMR" id="Q97IA4"/>
<dbReference type="STRING" id="272562.CA_C1748"/>
<dbReference type="KEGG" id="cac:CA_C1748"/>
<dbReference type="PATRIC" id="fig|272562.8.peg.1951"/>
<dbReference type="eggNOG" id="COG0571">
    <property type="taxonomic scope" value="Bacteria"/>
</dbReference>
<dbReference type="HOGENOM" id="CLU_000907_1_3_9"/>
<dbReference type="OrthoDB" id="9805026at2"/>
<dbReference type="Proteomes" id="UP000000814">
    <property type="component" value="Chromosome"/>
</dbReference>
<dbReference type="GO" id="GO:0005737">
    <property type="term" value="C:cytoplasm"/>
    <property type="evidence" value="ECO:0007669"/>
    <property type="project" value="UniProtKB-SubCell"/>
</dbReference>
<dbReference type="GO" id="GO:0003725">
    <property type="term" value="F:double-stranded RNA binding"/>
    <property type="evidence" value="ECO:0007669"/>
    <property type="project" value="TreeGrafter"/>
</dbReference>
<dbReference type="GO" id="GO:0046872">
    <property type="term" value="F:metal ion binding"/>
    <property type="evidence" value="ECO:0007669"/>
    <property type="project" value="UniProtKB-KW"/>
</dbReference>
<dbReference type="GO" id="GO:0004525">
    <property type="term" value="F:ribonuclease III activity"/>
    <property type="evidence" value="ECO:0007669"/>
    <property type="project" value="UniProtKB-UniRule"/>
</dbReference>
<dbReference type="GO" id="GO:0019843">
    <property type="term" value="F:rRNA binding"/>
    <property type="evidence" value="ECO:0007669"/>
    <property type="project" value="UniProtKB-KW"/>
</dbReference>
<dbReference type="GO" id="GO:0006397">
    <property type="term" value="P:mRNA processing"/>
    <property type="evidence" value="ECO:0007669"/>
    <property type="project" value="UniProtKB-UniRule"/>
</dbReference>
<dbReference type="GO" id="GO:0010468">
    <property type="term" value="P:regulation of gene expression"/>
    <property type="evidence" value="ECO:0007669"/>
    <property type="project" value="TreeGrafter"/>
</dbReference>
<dbReference type="GO" id="GO:0006364">
    <property type="term" value="P:rRNA processing"/>
    <property type="evidence" value="ECO:0007669"/>
    <property type="project" value="UniProtKB-UniRule"/>
</dbReference>
<dbReference type="GO" id="GO:0008033">
    <property type="term" value="P:tRNA processing"/>
    <property type="evidence" value="ECO:0007669"/>
    <property type="project" value="UniProtKB-KW"/>
</dbReference>
<dbReference type="CDD" id="cd10845">
    <property type="entry name" value="DSRM_RNAse_III_family"/>
    <property type="match status" value="1"/>
</dbReference>
<dbReference type="CDD" id="cd00593">
    <property type="entry name" value="RIBOc"/>
    <property type="match status" value="1"/>
</dbReference>
<dbReference type="FunFam" id="1.10.1520.10:FF:000001">
    <property type="entry name" value="Ribonuclease 3"/>
    <property type="match status" value="1"/>
</dbReference>
<dbReference type="FunFam" id="3.30.160.20:FF:000003">
    <property type="entry name" value="Ribonuclease 3"/>
    <property type="match status" value="1"/>
</dbReference>
<dbReference type="Gene3D" id="3.30.160.20">
    <property type="match status" value="1"/>
</dbReference>
<dbReference type="Gene3D" id="1.10.1520.10">
    <property type="entry name" value="Ribonuclease III domain"/>
    <property type="match status" value="1"/>
</dbReference>
<dbReference type="HAMAP" id="MF_00104">
    <property type="entry name" value="RNase_III"/>
    <property type="match status" value="1"/>
</dbReference>
<dbReference type="InterPro" id="IPR014720">
    <property type="entry name" value="dsRBD_dom"/>
</dbReference>
<dbReference type="InterPro" id="IPR011907">
    <property type="entry name" value="RNase_III"/>
</dbReference>
<dbReference type="InterPro" id="IPR000999">
    <property type="entry name" value="RNase_III_dom"/>
</dbReference>
<dbReference type="InterPro" id="IPR036389">
    <property type="entry name" value="RNase_III_sf"/>
</dbReference>
<dbReference type="NCBIfam" id="TIGR02191">
    <property type="entry name" value="RNaseIII"/>
    <property type="match status" value="1"/>
</dbReference>
<dbReference type="PANTHER" id="PTHR11207:SF0">
    <property type="entry name" value="RIBONUCLEASE 3"/>
    <property type="match status" value="1"/>
</dbReference>
<dbReference type="PANTHER" id="PTHR11207">
    <property type="entry name" value="RIBONUCLEASE III"/>
    <property type="match status" value="1"/>
</dbReference>
<dbReference type="Pfam" id="PF00035">
    <property type="entry name" value="dsrm"/>
    <property type="match status" value="1"/>
</dbReference>
<dbReference type="Pfam" id="PF14622">
    <property type="entry name" value="Ribonucleas_3_3"/>
    <property type="match status" value="1"/>
</dbReference>
<dbReference type="SMART" id="SM00358">
    <property type="entry name" value="DSRM"/>
    <property type="match status" value="1"/>
</dbReference>
<dbReference type="SMART" id="SM00535">
    <property type="entry name" value="RIBOc"/>
    <property type="match status" value="1"/>
</dbReference>
<dbReference type="SUPFAM" id="SSF54768">
    <property type="entry name" value="dsRNA-binding domain-like"/>
    <property type="match status" value="1"/>
</dbReference>
<dbReference type="SUPFAM" id="SSF69065">
    <property type="entry name" value="RNase III domain-like"/>
    <property type="match status" value="1"/>
</dbReference>
<dbReference type="PROSITE" id="PS50137">
    <property type="entry name" value="DS_RBD"/>
    <property type="match status" value="1"/>
</dbReference>
<dbReference type="PROSITE" id="PS00517">
    <property type="entry name" value="RNASE_3_1"/>
    <property type="match status" value="1"/>
</dbReference>
<dbReference type="PROSITE" id="PS50142">
    <property type="entry name" value="RNASE_3_2"/>
    <property type="match status" value="1"/>
</dbReference>
<evidence type="ECO:0000255" key="1">
    <source>
        <dbReference type="HAMAP-Rule" id="MF_00104"/>
    </source>
</evidence>
<proteinExistence type="inferred from homology"/>
<feature type="chain" id="PRO_0000180390" description="Ribonuclease 3">
    <location>
        <begin position="1"/>
        <end position="230"/>
    </location>
</feature>
<feature type="domain" description="RNase III" evidence="1">
    <location>
        <begin position="7"/>
        <end position="134"/>
    </location>
</feature>
<feature type="domain" description="DRBM" evidence="1">
    <location>
        <begin position="161"/>
        <end position="230"/>
    </location>
</feature>
<feature type="active site" evidence="1">
    <location>
        <position position="51"/>
    </location>
</feature>
<feature type="active site" evidence="1">
    <location>
        <position position="123"/>
    </location>
</feature>
<feature type="binding site" evidence="1">
    <location>
        <position position="47"/>
    </location>
    <ligand>
        <name>Mg(2+)</name>
        <dbReference type="ChEBI" id="CHEBI:18420"/>
    </ligand>
</feature>
<feature type="binding site" evidence="1">
    <location>
        <position position="120"/>
    </location>
    <ligand>
        <name>Mg(2+)</name>
        <dbReference type="ChEBI" id="CHEBI:18420"/>
    </ligand>
</feature>
<feature type="binding site" evidence="1">
    <location>
        <position position="123"/>
    </location>
    <ligand>
        <name>Mg(2+)</name>
        <dbReference type="ChEBI" id="CHEBI:18420"/>
    </ligand>
</feature>
<gene>
    <name evidence="1" type="primary">rnc</name>
    <name type="ordered locus">CA_C1748</name>
</gene>
<comment type="function">
    <text evidence="1">Digests double-stranded RNA. Involved in the processing of primary rRNA transcript to yield the immediate precursors to the large and small rRNAs (23S and 16S). Processes some mRNAs, and tRNAs when they are encoded in the rRNA operon. Processes pre-crRNA and tracrRNA of type II CRISPR loci if present in the organism.</text>
</comment>
<comment type="catalytic activity">
    <reaction evidence="1">
        <text>Endonucleolytic cleavage to 5'-phosphomonoester.</text>
        <dbReference type="EC" id="3.1.26.3"/>
    </reaction>
</comment>
<comment type="cofactor">
    <cofactor evidence="1">
        <name>Mg(2+)</name>
        <dbReference type="ChEBI" id="CHEBI:18420"/>
    </cofactor>
</comment>
<comment type="subunit">
    <text evidence="1">Homodimer.</text>
</comment>
<comment type="subcellular location">
    <subcellularLocation>
        <location evidence="1">Cytoplasm</location>
    </subcellularLocation>
</comment>
<comment type="similarity">
    <text evidence="1">Belongs to the ribonuclease III family.</text>
</comment>
<keyword id="KW-0963">Cytoplasm</keyword>
<keyword id="KW-0255">Endonuclease</keyword>
<keyword id="KW-0378">Hydrolase</keyword>
<keyword id="KW-0460">Magnesium</keyword>
<keyword id="KW-0479">Metal-binding</keyword>
<keyword id="KW-0507">mRNA processing</keyword>
<keyword id="KW-0540">Nuclease</keyword>
<keyword id="KW-1185">Reference proteome</keyword>
<keyword id="KW-0694">RNA-binding</keyword>
<keyword id="KW-0698">rRNA processing</keyword>
<keyword id="KW-0699">rRNA-binding</keyword>
<keyword id="KW-0819">tRNA processing</keyword>
<reference key="1">
    <citation type="journal article" date="2001" name="J. Bacteriol.">
        <title>Genome sequence and comparative analysis of the solvent-producing bacterium Clostridium acetobutylicum.</title>
        <authorList>
            <person name="Noelling J."/>
            <person name="Breton G."/>
            <person name="Omelchenko M.V."/>
            <person name="Makarova K.S."/>
            <person name="Zeng Q."/>
            <person name="Gibson R."/>
            <person name="Lee H.M."/>
            <person name="Dubois J."/>
            <person name="Qiu D."/>
            <person name="Hitti J."/>
            <person name="Wolf Y.I."/>
            <person name="Tatusov R.L."/>
            <person name="Sabathe F."/>
            <person name="Doucette-Stamm L.A."/>
            <person name="Soucaille P."/>
            <person name="Daly M.J."/>
            <person name="Bennett G.N."/>
            <person name="Koonin E.V."/>
            <person name="Smith D.R."/>
        </authorList>
    </citation>
    <scope>NUCLEOTIDE SEQUENCE [LARGE SCALE GENOMIC DNA]</scope>
    <source>
        <strain>ATCC 824 / DSM 792 / JCM 1419 / IAM 19013 / LMG 5710 / NBRC 13948 / NRRL B-527 / VKM B-1787 / 2291 / W</strain>
    </source>
</reference>
<protein>
    <recommendedName>
        <fullName evidence="1">Ribonuclease 3</fullName>
        <ecNumber evidence="1">3.1.26.3</ecNumber>
    </recommendedName>
    <alternativeName>
        <fullName evidence="1">Ribonuclease III</fullName>
        <shortName evidence="1">RNase III</shortName>
    </alternativeName>
</protein>
<organism>
    <name type="scientific">Clostridium acetobutylicum (strain ATCC 824 / DSM 792 / JCM 1419 / IAM 19013 / LMG 5710 / NBRC 13948 / NRRL B-527 / VKM B-1787 / 2291 / W)</name>
    <dbReference type="NCBI Taxonomy" id="272562"/>
    <lineage>
        <taxon>Bacteria</taxon>
        <taxon>Bacillati</taxon>
        <taxon>Bacillota</taxon>
        <taxon>Clostridia</taxon>
        <taxon>Eubacteriales</taxon>
        <taxon>Clostridiaceae</taxon>
        <taxon>Clostridium</taxon>
    </lineage>
</organism>
<name>RNC_CLOAB</name>
<accession>Q97IA4</accession>
<sequence length="230" mass="26205">MEEERLLEELESKLGIEFQNINLLVTALTHSSYANENKNAEYNERLEFLGDAVLQLSISEYFFKKYPTISEGELTKKRALVVCGMSLHSIGERWQLGKYIRMSHGEELTGGRTRVSIIADCVEAVIAAIYLDKGFDTAKNFILREFEGTIQNAVENKIILDYKTRLQEILQSKGKTDIKYTLVRHEGPPHRRKFFVNLNFDNDVKSTGEGYTKKDAEQDAACKALKGLDN</sequence>